<protein>
    <recommendedName>
        <fullName evidence="1">Translation initiation factor IF-1</fullName>
    </recommendedName>
</protein>
<feature type="chain" id="PRO_0000338923" description="Translation initiation factor IF-1">
    <location>
        <begin position="1"/>
        <end position="72"/>
    </location>
</feature>
<feature type="domain" description="S1-like" evidence="1">
    <location>
        <begin position="1"/>
        <end position="72"/>
    </location>
</feature>
<dbReference type="EMBL" id="CP000469">
    <property type="protein sequence ID" value="ABK47987.1"/>
    <property type="molecule type" value="Genomic_DNA"/>
</dbReference>
<dbReference type="RefSeq" id="WP_006081934.1">
    <property type="nucleotide sequence ID" value="NC_008577.1"/>
</dbReference>
<dbReference type="SMR" id="A0KW18"/>
<dbReference type="STRING" id="94122.Shewana3_1754"/>
<dbReference type="GeneID" id="94727745"/>
<dbReference type="KEGG" id="shn:Shewana3_1754"/>
<dbReference type="eggNOG" id="COG0361">
    <property type="taxonomic scope" value="Bacteria"/>
</dbReference>
<dbReference type="HOGENOM" id="CLU_151267_1_0_6"/>
<dbReference type="OrthoDB" id="9803250at2"/>
<dbReference type="Proteomes" id="UP000002589">
    <property type="component" value="Chromosome"/>
</dbReference>
<dbReference type="GO" id="GO:0005829">
    <property type="term" value="C:cytosol"/>
    <property type="evidence" value="ECO:0007669"/>
    <property type="project" value="TreeGrafter"/>
</dbReference>
<dbReference type="GO" id="GO:0043022">
    <property type="term" value="F:ribosome binding"/>
    <property type="evidence" value="ECO:0007669"/>
    <property type="project" value="UniProtKB-UniRule"/>
</dbReference>
<dbReference type="GO" id="GO:0019843">
    <property type="term" value="F:rRNA binding"/>
    <property type="evidence" value="ECO:0007669"/>
    <property type="project" value="UniProtKB-UniRule"/>
</dbReference>
<dbReference type="GO" id="GO:0003743">
    <property type="term" value="F:translation initiation factor activity"/>
    <property type="evidence" value="ECO:0007669"/>
    <property type="project" value="UniProtKB-UniRule"/>
</dbReference>
<dbReference type="CDD" id="cd04451">
    <property type="entry name" value="S1_IF1"/>
    <property type="match status" value="1"/>
</dbReference>
<dbReference type="FunFam" id="2.40.50.140:FF:000002">
    <property type="entry name" value="Translation initiation factor IF-1"/>
    <property type="match status" value="1"/>
</dbReference>
<dbReference type="Gene3D" id="2.40.50.140">
    <property type="entry name" value="Nucleic acid-binding proteins"/>
    <property type="match status" value="1"/>
</dbReference>
<dbReference type="HAMAP" id="MF_00075">
    <property type="entry name" value="IF_1"/>
    <property type="match status" value="1"/>
</dbReference>
<dbReference type="InterPro" id="IPR012340">
    <property type="entry name" value="NA-bd_OB-fold"/>
</dbReference>
<dbReference type="InterPro" id="IPR006196">
    <property type="entry name" value="RNA-binding_domain_S1_IF1"/>
</dbReference>
<dbReference type="InterPro" id="IPR003029">
    <property type="entry name" value="S1_domain"/>
</dbReference>
<dbReference type="InterPro" id="IPR004368">
    <property type="entry name" value="TIF_IF1"/>
</dbReference>
<dbReference type="NCBIfam" id="TIGR00008">
    <property type="entry name" value="infA"/>
    <property type="match status" value="1"/>
</dbReference>
<dbReference type="PANTHER" id="PTHR33370">
    <property type="entry name" value="TRANSLATION INITIATION FACTOR IF-1, CHLOROPLASTIC"/>
    <property type="match status" value="1"/>
</dbReference>
<dbReference type="PANTHER" id="PTHR33370:SF1">
    <property type="entry name" value="TRANSLATION INITIATION FACTOR IF-1, CHLOROPLASTIC"/>
    <property type="match status" value="1"/>
</dbReference>
<dbReference type="Pfam" id="PF01176">
    <property type="entry name" value="eIF-1a"/>
    <property type="match status" value="1"/>
</dbReference>
<dbReference type="SMART" id="SM00316">
    <property type="entry name" value="S1"/>
    <property type="match status" value="1"/>
</dbReference>
<dbReference type="SUPFAM" id="SSF50249">
    <property type="entry name" value="Nucleic acid-binding proteins"/>
    <property type="match status" value="1"/>
</dbReference>
<dbReference type="PROSITE" id="PS50832">
    <property type="entry name" value="S1_IF1_TYPE"/>
    <property type="match status" value="1"/>
</dbReference>
<gene>
    <name evidence="1" type="primary">infA</name>
    <name type="ordered locus">Shewana3_1754</name>
</gene>
<name>IF1_SHESA</name>
<accession>A0KW18</accession>
<comment type="function">
    <text evidence="1">One of the essential components for the initiation of protein synthesis. Stabilizes the binding of IF-2 and IF-3 on the 30S subunit to which N-formylmethionyl-tRNA(fMet) subsequently binds. Helps modulate mRNA selection, yielding the 30S pre-initiation complex (PIC). Upon addition of the 50S ribosomal subunit IF-1, IF-2 and IF-3 are released leaving the mature 70S translation initiation complex.</text>
</comment>
<comment type="subunit">
    <text evidence="1">Component of the 30S ribosomal translation pre-initiation complex which assembles on the 30S ribosome in the order IF-2 and IF-3, IF-1 and N-formylmethionyl-tRNA(fMet); mRNA recruitment can occur at any time during PIC assembly.</text>
</comment>
<comment type="subcellular location">
    <subcellularLocation>
        <location evidence="1">Cytoplasm</location>
    </subcellularLocation>
</comment>
<comment type="similarity">
    <text evidence="1">Belongs to the IF-1 family.</text>
</comment>
<organism>
    <name type="scientific">Shewanella sp. (strain ANA-3)</name>
    <dbReference type="NCBI Taxonomy" id="94122"/>
    <lineage>
        <taxon>Bacteria</taxon>
        <taxon>Pseudomonadati</taxon>
        <taxon>Pseudomonadota</taxon>
        <taxon>Gammaproteobacteria</taxon>
        <taxon>Alteromonadales</taxon>
        <taxon>Shewanellaceae</taxon>
        <taxon>Shewanella</taxon>
    </lineage>
</organism>
<proteinExistence type="inferred from homology"/>
<sequence length="72" mass="8273">MAKEDNIEMQGTILETLPNTMFRVELENGHVVIAHISGKMRKNYIRILTGDKVTVQLTPYDLTKGRIVFRAR</sequence>
<evidence type="ECO:0000255" key="1">
    <source>
        <dbReference type="HAMAP-Rule" id="MF_00075"/>
    </source>
</evidence>
<keyword id="KW-0963">Cytoplasm</keyword>
<keyword id="KW-0396">Initiation factor</keyword>
<keyword id="KW-0648">Protein biosynthesis</keyword>
<keyword id="KW-0694">RNA-binding</keyword>
<keyword id="KW-0699">rRNA-binding</keyword>
<reference key="1">
    <citation type="submission" date="2006-09" db="EMBL/GenBank/DDBJ databases">
        <title>Complete sequence of chromosome 1 of Shewanella sp. ANA-3.</title>
        <authorList>
            <person name="Copeland A."/>
            <person name="Lucas S."/>
            <person name="Lapidus A."/>
            <person name="Barry K."/>
            <person name="Detter J.C."/>
            <person name="Glavina del Rio T."/>
            <person name="Hammon N."/>
            <person name="Israni S."/>
            <person name="Dalin E."/>
            <person name="Tice H."/>
            <person name="Pitluck S."/>
            <person name="Chertkov O."/>
            <person name="Brettin T."/>
            <person name="Bruce D."/>
            <person name="Han C."/>
            <person name="Tapia R."/>
            <person name="Gilna P."/>
            <person name="Schmutz J."/>
            <person name="Larimer F."/>
            <person name="Land M."/>
            <person name="Hauser L."/>
            <person name="Kyrpides N."/>
            <person name="Kim E."/>
            <person name="Newman D."/>
            <person name="Salticov C."/>
            <person name="Konstantinidis K."/>
            <person name="Klappenback J."/>
            <person name="Tiedje J."/>
            <person name="Richardson P."/>
        </authorList>
    </citation>
    <scope>NUCLEOTIDE SEQUENCE [LARGE SCALE GENOMIC DNA]</scope>
    <source>
        <strain>ANA-3</strain>
    </source>
</reference>